<feature type="chain" id="PRO_0000077470" description="Protein YrdA">
    <location>
        <begin position="1"/>
        <end position="184"/>
    </location>
</feature>
<feature type="strand" evidence="2">
    <location>
        <begin position="26"/>
        <end position="33"/>
    </location>
</feature>
<feature type="strand" evidence="2">
    <location>
        <begin position="44"/>
        <end position="54"/>
    </location>
</feature>
<feature type="strand" evidence="2">
    <location>
        <begin position="65"/>
        <end position="67"/>
    </location>
</feature>
<feature type="strand" evidence="2">
    <location>
        <begin position="81"/>
        <end position="83"/>
    </location>
</feature>
<feature type="strand" evidence="2">
    <location>
        <begin position="94"/>
        <end position="97"/>
    </location>
</feature>
<feature type="strand" evidence="2">
    <location>
        <begin position="102"/>
        <end position="106"/>
    </location>
</feature>
<feature type="strand" evidence="2">
    <location>
        <begin position="120"/>
        <end position="124"/>
    </location>
</feature>
<feature type="strand" evidence="2">
    <location>
        <begin position="140"/>
        <end position="143"/>
    </location>
</feature>
<feature type="turn" evidence="2">
    <location>
        <begin position="144"/>
        <end position="147"/>
    </location>
</feature>
<feature type="strand" evidence="2">
    <location>
        <begin position="148"/>
        <end position="152"/>
    </location>
</feature>
<feature type="helix" evidence="2">
    <location>
        <begin position="155"/>
        <end position="177"/>
    </location>
</feature>
<protein>
    <recommendedName>
        <fullName>Protein YrdA</fullName>
    </recommendedName>
</protein>
<name>YRDA_ECOLI</name>
<dbReference type="EMBL" id="U18997">
    <property type="protein sequence ID" value="AAA58076.1"/>
    <property type="status" value="ALT_INIT"/>
    <property type="molecule type" value="Genomic_DNA"/>
</dbReference>
<dbReference type="EMBL" id="U00096">
    <property type="protein sequence ID" value="AAC76304.2"/>
    <property type="molecule type" value="Genomic_DNA"/>
</dbReference>
<dbReference type="EMBL" id="AP009048">
    <property type="protein sequence ID" value="BAE78012.1"/>
    <property type="molecule type" value="Genomic_DNA"/>
</dbReference>
<dbReference type="PIR" id="B65120">
    <property type="entry name" value="B65120"/>
</dbReference>
<dbReference type="RefSeq" id="NP_417738.4">
    <property type="nucleotide sequence ID" value="NC_000913.3"/>
</dbReference>
<dbReference type="RefSeq" id="WP_001286216.1">
    <property type="nucleotide sequence ID" value="NZ_STEB01000038.1"/>
</dbReference>
<dbReference type="PDB" id="3TIO">
    <property type="method" value="X-ray"/>
    <property type="resolution" value="1.41 A"/>
    <property type="chains" value="A/B/C/D/E/F=2-184"/>
</dbReference>
<dbReference type="PDB" id="3TIS">
    <property type="method" value="X-ray"/>
    <property type="resolution" value="2.30 A"/>
    <property type="chains" value="A/B/C=2-184"/>
</dbReference>
<dbReference type="PDBsum" id="3TIO"/>
<dbReference type="PDBsum" id="3TIS"/>
<dbReference type="SMR" id="P0A9W9"/>
<dbReference type="BioGRID" id="4263477">
    <property type="interactions" value="7"/>
</dbReference>
<dbReference type="DIP" id="DIP-48232N"/>
<dbReference type="FunCoup" id="P0A9W9">
    <property type="interactions" value="485"/>
</dbReference>
<dbReference type="IntAct" id="P0A9W9">
    <property type="interactions" value="1"/>
</dbReference>
<dbReference type="STRING" id="511145.b3279"/>
<dbReference type="jPOST" id="P0A9W9"/>
<dbReference type="PaxDb" id="511145-b3279"/>
<dbReference type="EnsemblBacteria" id="AAC76304">
    <property type="protein sequence ID" value="AAC76304"/>
    <property type="gene ID" value="b3279"/>
</dbReference>
<dbReference type="GeneID" id="947775"/>
<dbReference type="KEGG" id="ecj:JW5710"/>
<dbReference type="KEGG" id="eco:b3279"/>
<dbReference type="KEGG" id="ecoc:C3026_17835"/>
<dbReference type="PATRIC" id="fig|511145.12.peg.3373"/>
<dbReference type="EchoBASE" id="EB2687"/>
<dbReference type="eggNOG" id="COG0663">
    <property type="taxonomic scope" value="Bacteria"/>
</dbReference>
<dbReference type="HOGENOM" id="CLU_064827_7_0_6"/>
<dbReference type="InParanoid" id="P0A9W9"/>
<dbReference type="OMA" id="NIWYGAV"/>
<dbReference type="OrthoDB" id="9803036at2"/>
<dbReference type="PhylomeDB" id="P0A9W9"/>
<dbReference type="BioCyc" id="EcoCyc:G7696-MONOMER"/>
<dbReference type="EvolutionaryTrace" id="P0A9W9"/>
<dbReference type="PRO" id="PR:P0A9W9"/>
<dbReference type="Proteomes" id="UP000000625">
    <property type="component" value="Chromosome"/>
</dbReference>
<dbReference type="GO" id="GO:0005829">
    <property type="term" value="C:cytosol"/>
    <property type="evidence" value="ECO:0000314"/>
    <property type="project" value="EcoCyc"/>
</dbReference>
<dbReference type="GO" id="GO:0032991">
    <property type="term" value="C:protein-containing complex"/>
    <property type="evidence" value="ECO:0000314"/>
    <property type="project" value="EcoCyc"/>
</dbReference>
<dbReference type="GO" id="GO:0042802">
    <property type="term" value="F:identical protein binding"/>
    <property type="evidence" value="ECO:0000314"/>
    <property type="project" value="EcoCyc"/>
</dbReference>
<dbReference type="GO" id="GO:0008270">
    <property type="term" value="F:zinc ion binding"/>
    <property type="evidence" value="ECO:0000314"/>
    <property type="project" value="EcoCyc"/>
</dbReference>
<dbReference type="CDD" id="cd04645">
    <property type="entry name" value="LbH_gamma_CA_like"/>
    <property type="match status" value="1"/>
</dbReference>
<dbReference type="FunFam" id="2.160.10.10:FF:000019">
    <property type="entry name" value="YRDA protein yrdA"/>
    <property type="match status" value="1"/>
</dbReference>
<dbReference type="Gene3D" id="2.160.10.10">
    <property type="entry name" value="Hexapeptide repeat proteins"/>
    <property type="match status" value="1"/>
</dbReference>
<dbReference type="InterPro" id="IPR001451">
    <property type="entry name" value="Hexapep"/>
</dbReference>
<dbReference type="InterPro" id="IPR047324">
    <property type="entry name" value="LbH_gamma_CA-like"/>
</dbReference>
<dbReference type="InterPro" id="IPR050484">
    <property type="entry name" value="Transf_Hexapept/Carb_Anhydrase"/>
</dbReference>
<dbReference type="InterPro" id="IPR011004">
    <property type="entry name" value="Trimer_LpxA-like_sf"/>
</dbReference>
<dbReference type="PANTHER" id="PTHR13061">
    <property type="entry name" value="DYNACTIN SUBUNIT P25"/>
    <property type="match status" value="1"/>
</dbReference>
<dbReference type="PANTHER" id="PTHR13061:SF56">
    <property type="entry name" value="PROTEIN YRDA"/>
    <property type="match status" value="1"/>
</dbReference>
<dbReference type="Pfam" id="PF00132">
    <property type="entry name" value="Hexapep"/>
    <property type="match status" value="1"/>
</dbReference>
<dbReference type="SUPFAM" id="SSF51161">
    <property type="entry name" value="Trimeric LpxA-like enzymes"/>
    <property type="match status" value="1"/>
</dbReference>
<keyword id="KW-0002">3D-structure</keyword>
<keyword id="KW-1185">Reference proteome</keyword>
<reference key="1">
    <citation type="journal article" date="1997" name="Science">
        <title>The complete genome sequence of Escherichia coli K-12.</title>
        <authorList>
            <person name="Blattner F.R."/>
            <person name="Plunkett G. III"/>
            <person name="Bloch C.A."/>
            <person name="Perna N.T."/>
            <person name="Burland V."/>
            <person name="Riley M."/>
            <person name="Collado-Vides J."/>
            <person name="Glasner J.D."/>
            <person name="Rode C.K."/>
            <person name="Mayhew G.F."/>
            <person name="Gregor J."/>
            <person name="Davis N.W."/>
            <person name="Kirkpatrick H.A."/>
            <person name="Goeden M.A."/>
            <person name="Rose D.J."/>
            <person name="Mau B."/>
            <person name="Shao Y."/>
        </authorList>
    </citation>
    <scope>NUCLEOTIDE SEQUENCE [LARGE SCALE GENOMIC DNA]</scope>
    <source>
        <strain>K12 / MG1655 / ATCC 47076</strain>
    </source>
</reference>
<reference key="2">
    <citation type="journal article" date="2006" name="Mol. Syst. Biol.">
        <title>Highly accurate genome sequences of Escherichia coli K-12 strains MG1655 and W3110.</title>
        <authorList>
            <person name="Hayashi K."/>
            <person name="Morooka N."/>
            <person name="Yamamoto Y."/>
            <person name="Fujita K."/>
            <person name="Isono K."/>
            <person name="Choi S."/>
            <person name="Ohtsubo E."/>
            <person name="Baba T."/>
            <person name="Wanner B.L."/>
            <person name="Mori H."/>
            <person name="Horiuchi T."/>
        </authorList>
    </citation>
    <scope>NUCLEOTIDE SEQUENCE [LARGE SCALE GENOMIC DNA]</scope>
    <source>
        <strain>K12 / W3110 / ATCC 27325 / DSM 5911</strain>
    </source>
</reference>
<reference key="3">
    <citation type="journal article" date="1999" name="Electrophoresis">
        <title>Enrichment of low abundance proteins of Escherichia coli by hydroxyapatite chromatography.</title>
        <authorList>
            <person name="Fountoulakis M."/>
            <person name="Takacs M.-F."/>
            <person name="Berndt P."/>
            <person name="Langen H."/>
            <person name="Takacs B."/>
        </authorList>
    </citation>
    <scope>IDENTIFICATION BY MASS SPECTROMETRY</scope>
    <source>
        <strain>B / BL21</strain>
    </source>
</reference>
<organism>
    <name type="scientific">Escherichia coli (strain K12)</name>
    <dbReference type="NCBI Taxonomy" id="83333"/>
    <lineage>
        <taxon>Bacteria</taxon>
        <taxon>Pseudomonadati</taxon>
        <taxon>Pseudomonadota</taxon>
        <taxon>Gammaproteobacteria</taxon>
        <taxon>Enterobacterales</taxon>
        <taxon>Enterobacteriaceae</taxon>
        <taxon>Escherichia</taxon>
    </lineage>
</organism>
<proteinExistence type="evidence at protein level"/>
<gene>
    <name type="primary">yrdA</name>
    <name type="ordered locus">b3279</name>
    <name type="ordered locus">JW5710</name>
</gene>
<comment type="similarity">
    <text evidence="1">Belongs to the gamma-class carbonic anhydrase family.</text>
</comment>
<comment type="sequence caution" evidence="1">
    <conflict type="erroneous initiation">
        <sequence resource="EMBL-CDS" id="AAA58076"/>
    </conflict>
    <text>Extended N-terminus.</text>
</comment>
<evidence type="ECO:0000305" key="1"/>
<evidence type="ECO:0007829" key="2">
    <source>
        <dbReference type="PDB" id="3TIO"/>
    </source>
</evidence>
<accession>P0A9W9</accession>
<accession>P45770</accession>
<accession>Q2M6U4</accession>
<sequence length="184" mass="20245">MSDVLRPYRDLFPQIGQRVMIDDSSVVIGDVRLADDVGIWPLVVIRGDVHYVQIGARTNIQDGSMLHVTHKSSYNPDGNPLTIGEDVTVGHKVMLHGCTIGNRVLVGMGSILLDGAIVEDDVMIGAGSLVPQNKRLESGYLYLGSPVKQIRPLSDEEKAGLRYSANNYVKWKDEYLDQGNQTQP</sequence>